<keyword id="KW-0963">Cytoplasm</keyword>
<keyword id="KW-0489">Methyltransferase</keyword>
<keyword id="KW-1185">Reference proteome</keyword>
<keyword id="KW-0694">RNA-binding</keyword>
<keyword id="KW-0698">rRNA processing</keyword>
<keyword id="KW-0949">S-adenosyl-L-methionine</keyword>
<keyword id="KW-0808">Transferase</keyword>
<proteinExistence type="inferred from homology"/>
<comment type="function">
    <text evidence="1">Specifically dimethylates two adjacent adenosines (A1518 and A1519) in the loop of a conserved hairpin near the 3'-end of 16S rRNA in the 30S particle. May play a critical role in biogenesis of 30S subunits.</text>
</comment>
<comment type="catalytic activity">
    <reaction evidence="1">
        <text>adenosine(1518)/adenosine(1519) in 16S rRNA + 4 S-adenosyl-L-methionine = N(6)-dimethyladenosine(1518)/N(6)-dimethyladenosine(1519) in 16S rRNA + 4 S-adenosyl-L-homocysteine + 4 H(+)</text>
        <dbReference type="Rhea" id="RHEA:19609"/>
        <dbReference type="Rhea" id="RHEA-COMP:10232"/>
        <dbReference type="Rhea" id="RHEA-COMP:10233"/>
        <dbReference type="ChEBI" id="CHEBI:15378"/>
        <dbReference type="ChEBI" id="CHEBI:57856"/>
        <dbReference type="ChEBI" id="CHEBI:59789"/>
        <dbReference type="ChEBI" id="CHEBI:74411"/>
        <dbReference type="ChEBI" id="CHEBI:74493"/>
        <dbReference type="EC" id="2.1.1.182"/>
    </reaction>
</comment>
<comment type="subcellular location">
    <subcellularLocation>
        <location evidence="1">Cytoplasm</location>
    </subcellularLocation>
</comment>
<comment type="similarity">
    <text evidence="1">Belongs to the class I-like SAM-binding methyltransferase superfamily. rRNA adenine N(6)-methyltransferase family. RsmA subfamily.</text>
</comment>
<gene>
    <name evidence="1" type="primary">rsmA</name>
    <name evidence="1" type="synonym">ksgA</name>
    <name type="ordered locus">Cgl0910</name>
    <name type="ordered locus">cg1038</name>
</gene>
<sequence length="293" mass="31774">MEEPSGAQLLGPVEIRALAEKLDVTPTKKLGQNFVHDPNTVRRIVAAAELTPDDHVVEVGPGLGSLTLALVESAASVTAVEIDPRLAAELPETFQWRAPALAHKLSIVLKDALKVQQSDMAVQPTALVANLPYNVSVPVLLHMMEEFPTINKVLVMVQAEVADRLAADPGSKIYGVPSVKASFYGPVTRAGSIGKNVFWPAPKIESGLVKIVREDTAWKQDDETRKKVWPIIDAAFLQRRKTLRAALSGHYGSGQAAEEALRAADIDPTLRGEKLDVTDYVRLAGVLQQKDEK</sequence>
<evidence type="ECO:0000255" key="1">
    <source>
        <dbReference type="HAMAP-Rule" id="MF_00607"/>
    </source>
</evidence>
<dbReference type="EC" id="2.1.1.182" evidence="1"/>
<dbReference type="EMBL" id="BA000036">
    <property type="protein sequence ID" value="BAB98303.1"/>
    <property type="molecule type" value="Genomic_DNA"/>
</dbReference>
<dbReference type="EMBL" id="BX927150">
    <property type="protein sequence ID" value="CAF19616.1"/>
    <property type="molecule type" value="Genomic_DNA"/>
</dbReference>
<dbReference type="RefSeq" id="NP_600138.1">
    <property type="nucleotide sequence ID" value="NC_003450.3"/>
</dbReference>
<dbReference type="RefSeq" id="WP_011013966.1">
    <property type="nucleotide sequence ID" value="NC_006958.1"/>
</dbReference>
<dbReference type="SMR" id="Q8NRY1"/>
<dbReference type="STRING" id="196627.cg1038"/>
<dbReference type="GeneID" id="1018902"/>
<dbReference type="KEGG" id="cgb:cg1038"/>
<dbReference type="KEGG" id="cgl:Cgl0910"/>
<dbReference type="PATRIC" id="fig|196627.13.peg.895"/>
<dbReference type="eggNOG" id="COG0030">
    <property type="taxonomic scope" value="Bacteria"/>
</dbReference>
<dbReference type="HOGENOM" id="CLU_041220_1_1_11"/>
<dbReference type="OrthoDB" id="9814755at2"/>
<dbReference type="BioCyc" id="CORYNE:G18NG-10480-MONOMER"/>
<dbReference type="Proteomes" id="UP000000582">
    <property type="component" value="Chromosome"/>
</dbReference>
<dbReference type="Proteomes" id="UP000001009">
    <property type="component" value="Chromosome"/>
</dbReference>
<dbReference type="GO" id="GO:0005829">
    <property type="term" value="C:cytosol"/>
    <property type="evidence" value="ECO:0007669"/>
    <property type="project" value="TreeGrafter"/>
</dbReference>
<dbReference type="GO" id="GO:0052908">
    <property type="term" value="F:16S rRNA (adenine(1518)-N(6)/adenine(1519)-N(6))-dimethyltransferase activity"/>
    <property type="evidence" value="ECO:0007669"/>
    <property type="project" value="UniProtKB-EC"/>
</dbReference>
<dbReference type="GO" id="GO:0003723">
    <property type="term" value="F:RNA binding"/>
    <property type="evidence" value="ECO:0007669"/>
    <property type="project" value="UniProtKB-KW"/>
</dbReference>
<dbReference type="CDD" id="cd02440">
    <property type="entry name" value="AdoMet_MTases"/>
    <property type="match status" value="1"/>
</dbReference>
<dbReference type="FunFam" id="3.40.50.150:FF:000023">
    <property type="entry name" value="Ribosomal RNA small subunit methyltransferase A"/>
    <property type="match status" value="1"/>
</dbReference>
<dbReference type="Gene3D" id="1.10.8.100">
    <property type="entry name" value="Ribosomal RNA adenine dimethylase-like, domain 2"/>
    <property type="match status" value="1"/>
</dbReference>
<dbReference type="Gene3D" id="3.40.50.150">
    <property type="entry name" value="Vaccinia Virus protein VP39"/>
    <property type="match status" value="1"/>
</dbReference>
<dbReference type="HAMAP" id="MF_00607">
    <property type="entry name" value="16SrRNA_methyltr_A"/>
    <property type="match status" value="1"/>
</dbReference>
<dbReference type="InterPro" id="IPR001737">
    <property type="entry name" value="KsgA/Erm"/>
</dbReference>
<dbReference type="InterPro" id="IPR023165">
    <property type="entry name" value="rRNA_Ade_diMease-like_C"/>
</dbReference>
<dbReference type="InterPro" id="IPR020596">
    <property type="entry name" value="rRNA_Ade_Mease_Trfase_CS"/>
</dbReference>
<dbReference type="InterPro" id="IPR020598">
    <property type="entry name" value="rRNA_Ade_methylase_Trfase_N"/>
</dbReference>
<dbReference type="InterPro" id="IPR011530">
    <property type="entry name" value="rRNA_adenine_dimethylase"/>
</dbReference>
<dbReference type="InterPro" id="IPR029063">
    <property type="entry name" value="SAM-dependent_MTases_sf"/>
</dbReference>
<dbReference type="NCBIfam" id="TIGR00755">
    <property type="entry name" value="ksgA"/>
    <property type="match status" value="1"/>
</dbReference>
<dbReference type="PANTHER" id="PTHR11727">
    <property type="entry name" value="DIMETHYLADENOSINE TRANSFERASE"/>
    <property type="match status" value="1"/>
</dbReference>
<dbReference type="PANTHER" id="PTHR11727:SF7">
    <property type="entry name" value="DIMETHYLADENOSINE TRANSFERASE-RELATED"/>
    <property type="match status" value="1"/>
</dbReference>
<dbReference type="Pfam" id="PF00398">
    <property type="entry name" value="RrnaAD"/>
    <property type="match status" value="1"/>
</dbReference>
<dbReference type="SMART" id="SM00650">
    <property type="entry name" value="rADc"/>
    <property type="match status" value="1"/>
</dbReference>
<dbReference type="SUPFAM" id="SSF53335">
    <property type="entry name" value="S-adenosyl-L-methionine-dependent methyltransferases"/>
    <property type="match status" value="1"/>
</dbReference>
<dbReference type="PROSITE" id="PS01131">
    <property type="entry name" value="RRNA_A_DIMETH"/>
    <property type="match status" value="1"/>
</dbReference>
<dbReference type="PROSITE" id="PS51689">
    <property type="entry name" value="SAM_RNA_A_N6_MT"/>
    <property type="match status" value="1"/>
</dbReference>
<protein>
    <recommendedName>
        <fullName evidence="1">Ribosomal RNA small subunit methyltransferase A</fullName>
        <ecNumber evidence="1">2.1.1.182</ecNumber>
    </recommendedName>
    <alternativeName>
        <fullName evidence="1">16S rRNA (adenine(1518)-N(6)/adenine(1519)-N(6))-dimethyltransferase</fullName>
    </alternativeName>
    <alternativeName>
        <fullName evidence="1">16S rRNA dimethyladenosine transferase</fullName>
    </alternativeName>
    <alternativeName>
        <fullName evidence="1">16S rRNA dimethylase</fullName>
    </alternativeName>
    <alternativeName>
        <fullName evidence="1">S-adenosylmethionine-6-N', N'-adenosyl(rRNA) dimethyltransferase</fullName>
    </alternativeName>
</protein>
<name>RSMA_CORGL</name>
<feature type="chain" id="PRO_0000101519" description="Ribosomal RNA small subunit methyltransferase A">
    <location>
        <begin position="1"/>
        <end position="293"/>
    </location>
</feature>
<feature type="binding site" evidence="1">
    <location>
        <position position="33"/>
    </location>
    <ligand>
        <name>S-adenosyl-L-methionine</name>
        <dbReference type="ChEBI" id="CHEBI:59789"/>
    </ligand>
</feature>
<feature type="binding site" evidence="1">
    <location>
        <position position="35"/>
    </location>
    <ligand>
        <name>S-adenosyl-L-methionine</name>
        <dbReference type="ChEBI" id="CHEBI:59789"/>
    </ligand>
</feature>
<feature type="binding site" evidence="1">
    <location>
        <position position="60"/>
    </location>
    <ligand>
        <name>S-adenosyl-L-methionine</name>
        <dbReference type="ChEBI" id="CHEBI:59789"/>
    </ligand>
</feature>
<feature type="binding site" evidence="1">
    <location>
        <position position="81"/>
    </location>
    <ligand>
        <name>S-adenosyl-L-methionine</name>
        <dbReference type="ChEBI" id="CHEBI:59789"/>
    </ligand>
</feature>
<feature type="binding site" evidence="1">
    <location>
        <position position="111"/>
    </location>
    <ligand>
        <name>S-adenosyl-L-methionine</name>
        <dbReference type="ChEBI" id="CHEBI:59789"/>
    </ligand>
</feature>
<feature type="binding site" evidence="1">
    <location>
        <position position="130"/>
    </location>
    <ligand>
        <name>S-adenosyl-L-methionine</name>
        <dbReference type="ChEBI" id="CHEBI:59789"/>
    </ligand>
</feature>
<reference key="1">
    <citation type="journal article" date="2003" name="Appl. Microbiol. Biotechnol.">
        <title>The Corynebacterium glutamicum genome: features and impacts on biotechnological processes.</title>
        <authorList>
            <person name="Ikeda M."/>
            <person name="Nakagawa S."/>
        </authorList>
    </citation>
    <scope>NUCLEOTIDE SEQUENCE [LARGE SCALE GENOMIC DNA]</scope>
    <source>
        <strain>ATCC 13032 / DSM 20300 / JCM 1318 / BCRC 11384 / CCUG 27702 / LMG 3730 / NBRC 12168 / NCIMB 10025 / NRRL B-2784 / 534</strain>
    </source>
</reference>
<reference key="2">
    <citation type="journal article" date="2003" name="J. Biotechnol.">
        <title>The complete Corynebacterium glutamicum ATCC 13032 genome sequence and its impact on the production of L-aspartate-derived amino acids and vitamins.</title>
        <authorList>
            <person name="Kalinowski J."/>
            <person name="Bathe B."/>
            <person name="Bartels D."/>
            <person name="Bischoff N."/>
            <person name="Bott M."/>
            <person name="Burkovski A."/>
            <person name="Dusch N."/>
            <person name="Eggeling L."/>
            <person name="Eikmanns B.J."/>
            <person name="Gaigalat L."/>
            <person name="Goesmann A."/>
            <person name="Hartmann M."/>
            <person name="Huthmacher K."/>
            <person name="Kraemer R."/>
            <person name="Linke B."/>
            <person name="McHardy A.C."/>
            <person name="Meyer F."/>
            <person name="Moeckel B."/>
            <person name="Pfefferle W."/>
            <person name="Puehler A."/>
            <person name="Rey D.A."/>
            <person name="Rueckert C."/>
            <person name="Rupp O."/>
            <person name="Sahm H."/>
            <person name="Wendisch V.F."/>
            <person name="Wiegraebe I."/>
            <person name="Tauch A."/>
        </authorList>
    </citation>
    <scope>NUCLEOTIDE SEQUENCE [LARGE SCALE GENOMIC DNA]</scope>
    <source>
        <strain>ATCC 13032 / DSM 20300 / JCM 1318 / BCRC 11384 / CCUG 27702 / LMG 3730 / NBRC 12168 / NCIMB 10025 / NRRL B-2784 / 534</strain>
    </source>
</reference>
<accession>Q8NRY1</accession>
<organism>
    <name type="scientific">Corynebacterium glutamicum (strain ATCC 13032 / DSM 20300 / JCM 1318 / BCRC 11384 / CCUG 27702 / LMG 3730 / NBRC 12168 / NCIMB 10025 / NRRL B-2784 / 534)</name>
    <dbReference type="NCBI Taxonomy" id="196627"/>
    <lineage>
        <taxon>Bacteria</taxon>
        <taxon>Bacillati</taxon>
        <taxon>Actinomycetota</taxon>
        <taxon>Actinomycetes</taxon>
        <taxon>Mycobacteriales</taxon>
        <taxon>Corynebacteriaceae</taxon>
        <taxon>Corynebacterium</taxon>
    </lineage>
</organism>